<gene>
    <name type="ORF">DDB_G0286703</name>
</gene>
<name>TV23B_DICDI</name>
<organism>
    <name type="scientific">Dictyostelium discoideum</name>
    <name type="common">Social amoeba</name>
    <dbReference type="NCBI Taxonomy" id="44689"/>
    <lineage>
        <taxon>Eukaryota</taxon>
        <taxon>Amoebozoa</taxon>
        <taxon>Evosea</taxon>
        <taxon>Eumycetozoa</taxon>
        <taxon>Dictyostelia</taxon>
        <taxon>Dictyosteliales</taxon>
        <taxon>Dictyosteliaceae</taxon>
        <taxon>Dictyostelium</taxon>
    </lineage>
</organism>
<comment type="subcellular location">
    <subcellularLocation>
        <location evidence="3">Membrane</location>
        <topology evidence="3">Multi-pass membrane protein</topology>
    </subcellularLocation>
</comment>
<comment type="similarity">
    <text evidence="3">Belongs to the TVP23 family.</text>
</comment>
<keyword id="KW-0472">Membrane</keyword>
<keyword id="KW-1185">Reference proteome</keyword>
<keyword id="KW-0812">Transmembrane</keyword>
<keyword id="KW-1133">Transmembrane helix</keyword>
<evidence type="ECO:0000255" key="1"/>
<evidence type="ECO:0000256" key="2">
    <source>
        <dbReference type="SAM" id="MobiDB-lite"/>
    </source>
</evidence>
<evidence type="ECO:0000305" key="3"/>
<feature type="chain" id="PRO_0000327941" description="Uncharacterized Golgi apparatus membrane protein-like protein 2">
    <location>
        <begin position="1"/>
        <end position="261"/>
    </location>
</feature>
<feature type="transmembrane region" description="Helical" evidence="1">
    <location>
        <begin position="113"/>
        <end position="133"/>
    </location>
</feature>
<feature type="transmembrane region" description="Helical" evidence="1">
    <location>
        <begin position="183"/>
        <end position="200"/>
    </location>
</feature>
<feature type="transmembrane region" description="Helical" evidence="1">
    <location>
        <begin position="204"/>
        <end position="226"/>
    </location>
</feature>
<feature type="region of interest" description="Disordered" evidence="2">
    <location>
        <begin position="20"/>
        <end position="55"/>
    </location>
</feature>
<feature type="compositionally biased region" description="Polar residues" evidence="2">
    <location>
        <begin position="20"/>
        <end position="34"/>
    </location>
</feature>
<feature type="compositionally biased region" description="Low complexity" evidence="2">
    <location>
        <begin position="35"/>
        <end position="51"/>
    </location>
</feature>
<dbReference type="EMBL" id="AAFI02000089">
    <property type="protein sequence ID" value="EAL64107.1"/>
    <property type="molecule type" value="Genomic_DNA"/>
</dbReference>
<dbReference type="RefSeq" id="XP_637632.1">
    <property type="nucleotide sequence ID" value="XM_632540.1"/>
</dbReference>
<dbReference type="FunCoup" id="Q54LC9">
    <property type="interactions" value="15"/>
</dbReference>
<dbReference type="STRING" id="44689.Q54LC9"/>
<dbReference type="PaxDb" id="44689-DDB0305144"/>
<dbReference type="EnsemblProtists" id="EAL64107">
    <property type="protein sequence ID" value="EAL64107"/>
    <property type="gene ID" value="DDB_G0286703"/>
</dbReference>
<dbReference type="GeneID" id="8625773"/>
<dbReference type="KEGG" id="ddi:DDB_G0286703"/>
<dbReference type="dictyBase" id="DDB_G0286703">
    <property type="gene designation" value="fam18B"/>
</dbReference>
<dbReference type="VEuPathDB" id="AmoebaDB:DDB_G0286703"/>
<dbReference type="eggNOG" id="KOG3195">
    <property type="taxonomic scope" value="Eukaryota"/>
</dbReference>
<dbReference type="HOGENOM" id="CLU_1067230_0_0_1"/>
<dbReference type="InParanoid" id="Q54LC9"/>
<dbReference type="OMA" id="ESAHPNR"/>
<dbReference type="PhylomeDB" id="Q54LC9"/>
<dbReference type="PRO" id="PR:Q54LC9"/>
<dbReference type="Proteomes" id="UP000002195">
    <property type="component" value="Chromosome 4"/>
</dbReference>
<dbReference type="GO" id="GO:0000139">
    <property type="term" value="C:Golgi membrane"/>
    <property type="evidence" value="ECO:0000318"/>
    <property type="project" value="GO_Central"/>
</dbReference>
<dbReference type="GO" id="GO:0009306">
    <property type="term" value="P:protein secretion"/>
    <property type="evidence" value="ECO:0000318"/>
    <property type="project" value="GO_Central"/>
</dbReference>
<dbReference type="GO" id="GO:0016192">
    <property type="term" value="P:vesicle-mediated transport"/>
    <property type="evidence" value="ECO:0000318"/>
    <property type="project" value="GO_Central"/>
</dbReference>
<dbReference type="InterPro" id="IPR008564">
    <property type="entry name" value="TVP23-like"/>
</dbReference>
<dbReference type="PANTHER" id="PTHR13019">
    <property type="entry name" value="GOLGI APPARATUS MEMBRANE PROTEIN TVP23"/>
    <property type="match status" value="1"/>
</dbReference>
<dbReference type="PANTHER" id="PTHR13019:SF7">
    <property type="entry name" value="GOLGI APPARATUS MEMBRANE PROTEIN TVP23"/>
    <property type="match status" value="1"/>
</dbReference>
<dbReference type="Pfam" id="PF05832">
    <property type="entry name" value="DUF846"/>
    <property type="match status" value="1"/>
</dbReference>
<reference key="1">
    <citation type="journal article" date="2005" name="Nature">
        <title>The genome of the social amoeba Dictyostelium discoideum.</title>
        <authorList>
            <person name="Eichinger L."/>
            <person name="Pachebat J.A."/>
            <person name="Gloeckner G."/>
            <person name="Rajandream M.A."/>
            <person name="Sucgang R."/>
            <person name="Berriman M."/>
            <person name="Song J."/>
            <person name="Olsen R."/>
            <person name="Szafranski K."/>
            <person name="Xu Q."/>
            <person name="Tunggal B."/>
            <person name="Kummerfeld S."/>
            <person name="Madera M."/>
            <person name="Konfortov B.A."/>
            <person name="Rivero F."/>
            <person name="Bankier A.T."/>
            <person name="Lehmann R."/>
            <person name="Hamlin N."/>
            <person name="Davies R."/>
            <person name="Gaudet P."/>
            <person name="Fey P."/>
            <person name="Pilcher K."/>
            <person name="Chen G."/>
            <person name="Saunders D."/>
            <person name="Sodergren E.J."/>
            <person name="Davis P."/>
            <person name="Kerhornou A."/>
            <person name="Nie X."/>
            <person name="Hall N."/>
            <person name="Anjard C."/>
            <person name="Hemphill L."/>
            <person name="Bason N."/>
            <person name="Farbrother P."/>
            <person name="Desany B."/>
            <person name="Just E."/>
            <person name="Morio T."/>
            <person name="Rost R."/>
            <person name="Churcher C.M."/>
            <person name="Cooper J."/>
            <person name="Haydock S."/>
            <person name="van Driessche N."/>
            <person name="Cronin A."/>
            <person name="Goodhead I."/>
            <person name="Muzny D.M."/>
            <person name="Mourier T."/>
            <person name="Pain A."/>
            <person name="Lu M."/>
            <person name="Harper D."/>
            <person name="Lindsay R."/>
            <person name="Hauser H."/>
            <person name="James K.D."/>
            <person name="Quiles M."/>
            <person name="Madan Babu M."/>
            <person name="Saito T."/>
            <person name="Buchrieser C."/>
            <person name="Wardroper A."/>
            <person name="Felder M."/>
            <person name="Thangavelu M."/>
            <person name="Johnson D."/>
            <person name="Knights A."/>
            <person name="Loulseged H."/>
            <person name="Mungall K.L."/>
            <person name="Oliver K."/>
            <person name="Price C."/>
            <person name="Quail M.A."/>
            <person name="Urushihara H."/>
            <person name="Hernandez J."/>
            <person name="Rabbinowitsch E."/>
            <person name="Steffen D."/>
            <person name="Sanders M."/>
            <person name="Ma J."/>
            <person name="Kohara Y."/>
            <person name="Sharp S."/>
            <person name="Simmonds M.N."/>
            <person name="Spiegler S."/>
            <person name="Tivey A."/>
            <person name="Sugano S."/>
            <person name="White B."/>
            <person name="Walker D."/>
            <person name="Woodward J.R."/>
            <person name="Winckler T."/>
            <person name="Tanaka Y."/>
            <person name="Shaulsky G."/>
            <person name="Schleicher M."/>
            <person name="Weinstock G.M."/>
            <person name="Rosenthal A."/>
            <person name="Cox E.C."/>
            <person name="Chisholm R.L."/>
            <person name="Gibbs R.A."/>
            <person name="Loomis W.F."/>
            <person name="Platzer M."/>
            <person name="Kay R.R."/>
            <person name="Williams J.G."/>
            <person name="Dear P.H."/>
            <person name="Noegel A.A."/>
            <person name="Barrell B.G."/>
            <person name="Kuspa A."/>
        </authorList>
    </citation>
    <scope>NUCLEOTIDE SEQUENCE [LARGE SCALE GENOMIC DNA]</scope>
    <source>
        <strain>AX4</strain>
    </source>
</reference>
<accession>Q54LC9</accession>
<proteinExistence type="inferred from homology"/>
<protein>
    <recommendedName>
        <fullName>Uncharacterized Golgi apparatus membrane protein-like protein 2</fullName>
    </recommendedName>
</protein>
<sequence>MSKVNDFGFSESNGDEVGITMSTPFLESDNSNTQSISGRIGSNNNSNSKNSGGIGSGGGININGDPYGNSGGGGSKTSNNFGSGTIAFMKGLTHPVAASVHVLFKLSAILLYLFSGLFGGGFILTFILCILLLSFDFYSVKNITGRLLVGLRWWNQVDPKDGSNKWYFETAPEGHRVNQIESLIFWITLYGTPIFWILFFLKCIISLQFAWILIPIIALSLNMANVYGFYKCSNSNVSNAAATFASNYIGRSLLQRASSFM</sequence>